<comment type="similarity">
    <text evidence="1">Belongs to the SfsA family.</text>
</comment>
<dbReference type="EMBL" id="AE008917">
    <property type="protein sequence ID" value="AAL51901.1"/>
    <property type="molecule type" value="Genomic_DNA"/>
</dbReference>
<dbReference type="PIR" id="AB3342">
    <property type="entry name" value="AB3342"/>
</dbReference>
<dbReference type="RefSeq" id="WP_004683943.1">
    <property type="nucleotide sequence ID" value="NZ_GG703780.1"/>
</dbReference>
<dbReference type="SMR" id="Q8YHS6"/>
<dbReference type="GeneID" id="29593517"/>
<dbReference type="KEGG" id="bme:BMEI0720"/>
<dbReference type="KEGG" id="bmel:DK63_707"/>
<dbReference type="PATRIC" id="fig|224914.52.peg.738"/>
<dbReference type="eggNOG" id="COG1489">
    <property type="taxonomic scope" value="Bacteria"/>
</dbReference>
<dbReference type="PhylomeDB" id="Q8YHS6"/>
<dbReference type="Proteomes" id="UP000000419">
    <property type="component" value="Chromosome I"/>
</dbReference>
<dbReference type="GO" id="GO:0003677">
    <property type="term" value="F:DNA binding"/>
    <property type="evidence" value="ECO:0007669"/>
    <property type="project" value="InterPro"/>
</dbReference>
<dbReference type="CDD" id="cd22359">
    <property type="entry name" value="SfsA-like_bacterial"/>
    <property type="match status" value="1"/>
</dbReference>
<dbReference type="Gene3D" id="2.40.50.580">
    <property type="match status" value="1"/>
</dbReference>
<dbReference type="Gene3D" id="3.40.1350.60">
    <property type="match status" value="1"/>
</dbReference>
<dbReference type="HAMAP" id="MF_00095">
    <property type="entry name" value="SfsA"/>
    <property type="match status" value="1"/>
</dbReference>
<dbReference type="InterPro" id="IPR005224">
    <property type="entry name" value="SfsA"/>
</dbReference>
<dbReference type="InterPro" id="IPR040452">
    <property type="entry name" value="SfsA_C"/>
</dbReference>
<dbReference type="InterPro" id="IPR041465">
    <property type="entry name" value="SfsA_N"/>
</dbReference>
<dbReference type="NCBIfam" id="TIGR00230">
    <property type="entry name" value="sfsA"/>
    <property type="match status" value="1"/>
</dbReference>
<dbReference type="PANTHER" id="PTHR30545">
    <property type="entry name" value="SUGAR FERMENTATION STIMULATION PROTEIN A"/>
    <property type="match status" value="1"/>
</dbReference>
<dbReference type="PANTHER" id="PTHR30545:SF2">
    <property type="entry name" value="SUGAR FERMENTATION STIMULATION PROTEIN A"/>
    <property type="match status" value="1"/>
</dbReference>
<dbReference type="Pfam" id="PF03749">
    <property type="entry name" value="SfsA"/>
    <property type="match status" value="1"/>
</dbReference>
<dbReference type="Pfam" id="PF17746">
    <property type="entry name" value="SfsA_N"/>
    <property type="match status" value="1"/>
</dbReference>
<organism>
    <name type="scientific">Brucella melitensis biotype 1 (strain ATCC 23456 / CCUG 17765 / NCTC 10094 / 16M)</name>
    <dbReference type="NCBI Taxonomy" id="224914"/>
    <lineage>
        <taxon>Bacteria</taxon>
        <taxon>Pseudomonadati</taxon>
        <taxon>Pseudomonadota</taxon>
        <taxon>Alphaproteobacteria</taxon>
        <taxon>Hyphomicrobiales</taxon>
        <taxon>Brucellaceae</taxon>
        <taxon>Brucella/Ochrobactrum group</taxon>
        <taxon>Brucella</taxon>
    </lineage>
</organism>
<name>SFSA_BRUME</name>
<feature type="chain" id="PRO_0000152274" description="Sugar fermentation stimulation protein homolog">
    <location>
        <begin position="1"/>
        <end position="238"/>
    </location>
</feature>
<reference key="1">
    <citation type="journal article" date="2002" name="Proc. Natl. Acad. Sci. U.S.A.">
        <title>The genome sequence of the facultative intracellular pathogen Brucella melitensis.</title>
        <authorList>
            <person name="DelVecchio V.G."/>
            <person name="Kapatral V."/>
            <person name="Redkar R.J."/>
            <person name="Patra G."/>
            <person name="Mujer C."/>
            <person name="Los T."/>
            <person name="Ivanova N."/>
            <person name="Anderson I."/>
            <person name="Bhattacharyya A."/>
            <person name="Lykidis A."/>
            <person name="Reznik G."/>
            <person name="Jablonski L."/>
            <person name="Larsen N."/>
            <person name="D'Souza M."/>
            <person name="Bernal A."/>
            <person name="Mazur M."/>
            <person name="Goltsman E."/>
            <person name="Selkov E."/>
            <person name="Elzer P.H."/>
            <person name="Hagius S."/>
            <person name="O'Callaghan D."/>
            <person name="Letesson J.-J."/>
            <person name="Haselkorn R."/>
            <person name="Kyrpides N.C."/>
            <person name="Overbeek R."/>
        </authorList>
    </citation>
    <scope>NUCLEOTIDE SEQUENCE [LARGE SCALE GENOMIC DNA]</scope>
    <source>
        <strain>ATCC 23456 / CCUG 17765 / NCTC 10094 / 16M</strain>
    </source>
</reference>
<proteinExistence type="inferred from homology"/>
<protein>
    <recommendedName>
        <fullName evidence="1">Sugar fermentation stimulation protein homolog</fullName>
    </recommendedName>
</protein>
<accession>Q8YHS6</accession>
<gene>
    <name evidence="1" type="primary">sfsA</name>
    <name type="ordered locus">BMEI0720</name>
</gene>
<sequence>MLFPTPLISGRLERRYKRFLADVTLDDGRFITASVPNTGSMLGLTAPGSRVWLSFSDAPHRKYAHTLQIVEADNTLVGVNTGLPNRIAEEAILKGLIPDLDGYATLKREQKYGRNSRIDLLLDDGPRPRAYVEVKNVHFIRTPGLAEFPDTVTARGAKHLDELVDVVAAGHRGIMLFITQRADCSRFGISGDLDPFYARAFERAIASGVEAWAVRCHITENGIDATELVPIEDMRRIE</sequence>
<evidence type="ECO:0000255" key="1">
    <source>
        <dbReference type="HAMAP-Rule" id="MF_00095"/>
    </source>
</evidence>